<dbReference type="EC" id="1.3.1.98" evidence="1"/>
<dbReference type="EMBL" id="CP000386">
    <property type="protein sequence ID" value="ABG05720.1"/>
    <property type="molecule type" value="Genomic_DNA"/>
</dbReference>
<dbReference type="RefSeq" id="WP_011565729.1">
    <property type="nucleotide sequence ID" value="NC_008148.1"/>
</dbReference>
<dbReference type="SMR" id="Q1ASA8"/>
<dbReference type="STRING" id="266117.Rxyl_2807"/>
<dbReference type="KEGG" id="rxy:Rxyl_2807"/>
<dbReference type="eggNOG" id="COG0812">
    <property type="taxonomic scope" value="Bacteria"/>
</dbReference>
<dbReference type="HOGENOM" id="CLU_035304_1_1_11"/>
<dbReference type="PhylomeDB" id="Q1ASA8"/>
<dbReference type="UniPathway" id="UPA00219"/>
<dbReference type="Proteomes" id="UP000006637">
    <property type="component" value="Chromosome"/>
</dbReference>
<dbReference type="GO" id="GO:0005829">
    <property type="term" value="C:cytosol"/>
    <property type="evidence" value="ECO:0007669"/>
    <property type="project" value="TreeGrafter"/>
</dbReference>
<dbReference type="GO" id="GO:0071949">
    <property type="term" value="F:FAD binding"/>
    <property type="evidence" value="ECO:0007669"/>
    <property type="project" value="InterPro"/>
</dbReference>
<dbReference type="GO" id="GO:0008762">
    <property type="term" value="F:UDP-N-acetylmuramate dehydrogenase activity"/>
    <property type="evidence" value="ECO:0007669"/>
    <property type="project" value="UniProtKB-UniRule"/>
</dbReference>
<dbReference type="GO" id="GO:0051301">
    <property type="term" value="P:cell division"/>
    <property type="evidence" value="ECO:0007669"/>
    <property type="project" value="UniProtKB-KW"/>
</dbReference>
<dbReference type="GO" id="GO:0071555">
    <property type="term" value="P:cell wall organization"/>
    <property type="evidence" value="ECO:0007669"/>
    <property type="project" value="UniProtKB-KW"/>
</dbReference>
<dbReference type="GO" id="GO:0009252">
    <property type="term" value="P:peptidoglycan biosynthetic process"/>
    <property type="evidence" value="ECO:0007669"/>
    <property type="project" value="UniProtKB-UniRule"/>
</dbReference>
<dbReference type="GO" id="GO:0008360">
    <property type="term" value="P:regulation of cell shape"/>
    <property type="evidence" value="ECO:0007669"/>
    <property type="project" value="UniProtKB-KW"/>
</dbReference>
<dbReference type="Gene3D" id="3.30.465.10">
    <property type="match status" value="1"/>
</dbReference>
<dbReference type="Gene3D" id="3.90.78.10">
    <property type="entry name" value="UDP-N-acetylenolpyruvoylglucosamine reductase, C-terminal domain"/>
    <property type="match status" value="1"/>
</dbReference>
<dbReference type="Gene3D" id="3.30.43.10">
    <property type="entry name" value="Uridine Diphospho-n-acetylenolpyruvylglucosamine Reductase, domain 2"/>
    <property type="match status" value="1"/>
</dbReference>
<dbReference type="HAMAP" id="MF_00037">
    <property type="entry name" value="MurB"/>
    <property type="match status" value="1"/>
</dbReference>
<dbReference type="InterPro" id="IPR016166">
    <property type="entry name" value="FAD-bd_PCMH"/>
</dbReference>
<dbReference type="InterPro" id="IPR036318">
    <property type="entry name" value="FAD-bd_PCMH-like_sf"/>
</dbReference>
<dbReference type="InterPro" id="IPR016167">
    <property type="entry name" value="FAD-bd_PCMH_sub1"/>
</dbReference>
<dbReference type="InterPro" id="IPR016169">
    <property type="entry name" value="FAD-bd_PCMH_sub2"/>
</dbReference>
<dbReference type="InterPro" id="IPR003170">
    <property type="entry name" value="MurB"/>
</dbReference>
<dbReference type="InterPro" id="IPR011601">
    <property type="entry name" value="MurB_C"/>
</dbReference>
<dbReference type="InterPro" id="IPR036635">
    <property type="entry name" value="MurB_C_sf"/>
</dbReference>
<dbReference type="InterPro" id="IPR006094">
    <property type="entry name" value="Oxid_FAD_bind_N"/>
</dbReference>
<dbReference type="NCBIfam" id="TIGR00179">
    <property type="entry name" value="murB"/>
    <property type="match status" value="1"/>
</dbReference>
<dbReference type="NCBIfam" id="NF010480">
    <property type="entry name" value="PRK13905.1"/>
    <property type="match status" value="1"/>
</dbReference>
<dbReference type="PANTHER" id="PTHR21071">
    <property type="entry name" value="UDP-N-ACETYLENOLPYRUVOYLGLUCOSAMINE REDUCTASE"/>
    <property type="match status" value="1"/>
</dbReference>
<dbReference type="PANTHER" id="PTHR21071:SF4">
    <property type="entry name" value="UDP-N-ACETYLENOLPYRUVOYLGLUCOSAMINE REDUCTASE"/>
    <property type="match status" value="1"/>
</dbReference>
<dbReference type="Pfam" id="PF01565">
    <property type="entry name" value="FAD_binding_4"/>
    <property type="match status" value="1"/>
</dbReference>
<dbReference type="Pfam" id="PF02873">
    <property type="entry name" value="MurB_C"/>
    <property type="match status" value="1"/>
</dbReference>
<dbReference type="SUPFAM" id="SSF56176">
    <property type="entry name" value="FAD-binding/transporter-associated domain-like"/>
    <property type="match status" value="1"/>
</dbReference>
<dbReference type="SUPFAM" id="SSF56194">
    <property type="entry name" value="Uridine diphospho-N-Acetylenolpyruvylglucosamine reductase, MurB, C-terminal domain"/>
    <property type="match status" value="1"/>
</dbReference>
<dbReference type="PROSITE" id="PS51387">
    <property type="entry name" value="FAD_PCMH"/>
    <property type="match status" value="1"/>
</dbReference>
<accession>Q1ASA8</accession>
<feature type="chain" id="PRO_0000332498" description="UDP-N-acetylenolpyruvoylglucosamine reductase">
    <location>
        <begin position="1"/>
        <end position="297"/>
    </location>
</feature>
<feature type="domain" description="FAD-binding PCMH-type" evidence="1">
    <location>
        <begin position="27"/>
        <end position="192"/>
    </location>
</feature>
<feature type="active site" evidence="1">
    <location>
        <position position="170"/>
    </location>
</feature>
<feature type="active site" description="Proton donor" evidence="1">
    <location>
        <position position="220"/>
    </location>
</feature>
<feature type="active site" evidence="1">
    <location>
        <position position="290"/>
    </location>
</feature>
<proteinExistence type="inferred from homology"/>
<comment type="function">
    <text evidence="1">Cell wall formation.</text>
</comment>
<comment type="catalytic activity">
    <reaction evidence="1">
        <text>UDP-N-acetyl-alpha-D-muramate + NADP(+) = UDP-N-acetyl-3-O-(1-carboxyvinyl)-alpha-D-glucosamine + NADPH + H(+)</text>
        <dbReference type="Rhea" id="RHEA:12248"/>
        <dbReference type="ChEBI" id="CHEBI:15378"/>
        <dbReference type="ChEBI" id="CHEBI:57783"/>
        <dbReference type="ChEBI" id="CHEBI:58349"/>
        <dbReference type="ChEBI" id="CHEBI:68483"/>
        <dbReference type="ChEBI" id="CHEBI:70757"/>
        <dbReference type="EC" id="1.3.1.98"/>
    </reaction>
</comment>
<comment type="cofactor">
    <cofactor evidence="1">
        <name>FAD</name>
        <dbReference type="ChEBI" id="CHEBI:57692"/>
    </cofactor>
</comment>
<comment type="pathway">
    <text evidence="1">Cell wall biogenesis; peptidoglycan biosynthesis.</text>
</comment>
<comment type="subcellular location">
    <subcellularLocation>
        <location evidence="1">Cytoplasm</location>
    </subcellularLocation>
</comment>
<comment type="similarity">
    <text evidence="1">Belongs to the MurB family.</text>
</comment>
<gene>
    <name evidence="1" type="primary">murB</name>
    <name type="ordered locus">Rxyl_2807</name>
</gene>
<name>MURB_RUBXD</name>
<organism>
    <name type="scientific">Rubrobacter xylanophilus (strain DSM 9941 / JCM 11954 / NBRC 16129 / PRD-1)</name>
    <dbReference type="NCBI Taxonomy" id="266117"/>
    <lineage>
        <taxon>Bacteria</taxon>
        <taxon>Bacillati</taxon>
        <taxon>Actinomycetota</taxon>
        <taxon>Rubrobacteria</taxon>
        <taxon>Rubrobacterales</taxon>
        <taxon>Rubrobacteraceae</taxon>
        <taxon>Rubrobacter</taxon>
    </lineage>
</organism>
<sequence length="297" mass="31998">MHDGTLQRLFPAAKFDEPLRRYTAWKIGGPADALLEPSSIQELLSAVELAGEHGVPVTVLGGGTNVLVRDGGIRGLTIRLAKSLRGVKLSGETLVAEAGALYPVLANMTASRGLAGLEFATGIPGTVGGAVFMNAGAYGSETARVLLWADILRDGRVVRMGPEELGLSYRRSILHDHPGWVVLRAAYRLHPGDPEDLRERIREFRTLRMNGSPNRPSCGSTFKRPPGDFPGRVIEAAGLKGLRVGQIEVSTVHANYFVNLGGGTASDALRLMELVRERVRERLGVELEPEVRVVGEP</sequence>
<protein>
    <recommendedName>
        <fullName evidence="1">UDP-N-acetylenolpyruvoylglucosamine reductase</fullName>
        <ecNumber evidence="1">1.3.1.98</ecNumber>
    </recommendedName>
    <alternativeName>
        <fullName evidence="1">UDP-N-acetylmuramate dehydrogenase</fullName>
    </alternativeName>
</protein>
<keyword id="KW-0131">Cell cycle</keyword>
<keyword id="KW-0132">Cell division</keyword>
<keyword id="KW-0133">Cell shape</keyword>
<keyword id="KW-0961">Cell wall biogenesis/degradation</keyword>
<keyword id="KW-0963">Cytoplasm</keyword>
<keyword id="KW-0274">FAD</keyword>
<keyword id="KW-0285">Flavoprotein</keyword>
<keyword id="KW-0521">NADP</keyword>
<keyword id="KW-0560">Oxidoreductase</keyword>
<keyword id="KW-0573">Peptidoglycan synthesis</keyword>
<keyword id="KW-1185">Reference proteome</keyword>
<evidence type="ECO:0000255" key="1">
    <source>
        <dbReference type="HAMAP-Rule" id="MF_00037"/>
    </source>
</evidence>
<reference key="1">
    <citation type="submission" date="2006-06" db="EMBL/GenBank/DDBJ databases">
        <title>Complete sequence of Rubrobacter xylanophilus DSM 9941.</title>
        <authorList>
            <consortium name="US DOE Joint Genome Institute"/>
            <person name="Copeland A."/>
            <person name="Lucas S."/>
            <person name="Lapidus A."/>
            <person name="Barry K."/>
            <person name="Detter J.C."/>
            <person name="Glavina del Rio T."/>
            <person name="Hammon N."/>
            <person name="Israni S."/>
            <person name="Dalin E."/>
            <person name="Tice H."/>
            <person name="Pitluck S."/>
            <person name="Munk A.C."/>
            <person name="Brettin T."/>
            <person name="Bruce D."/>
            <person name="Han C."/>
            <person name="Tapia R."/>
            <person name="Gilna P."/>
            <person name="Schmutz J."/>
            <person name="Larimer F."/>
            <person name="Land M."/>
            <person name="Hauser L."/>
            <person name="Kyrpides N."/>
            <person name="Lykidis A."/>
            <person name="da Costa M.S."/>
            <person name="Rainey F.A."/>
            <person name="Empadinhas N."/>
            <person name="Jolivet E."/>
            <person name="Battista J.R."/>
            <person name="Richardson P."/>
        </authorList>
    </citation>
    <scope>NUCLEOTIDE SEQUENCE [LARGE SCALE GENOMIC DNA]</scope>
    <source>
        <strain>DSM 9941 / JCM 11954 / NBRC 16129 / PRD-1</strain>
    </source>
</reference>